<accession>A1RKL0</accession>
<feature type="chain" id="PRO_0000309431" description="UPF0502 protein Sputw3181_2381">
    <location>
        <begin position="1"/>
        <end position="221"/>
    </location>
</feature>
<protein>
    <recommendedName>
        <fullName evidence="1">UPF0502 protein Sputw3181_2381</fullName>
    </recommendedName>
</protein>
<comment type="similarity">
    <text evidence="1">Belongs to the UPF0502 family.</text>
</comment>
<reference key="1">
    <citation type="submission" date="2006-12" db="EMBL/GenBank/DDBJ databases">
        <title>Complete sequence of Shewanella sp. W3-18-1.</title>
        <authorList>
            <consortium name="US DOE Joint Genome Institute"/>
            <person name="Copeland A."/>
            <person name="Lucas S."/>
            <person name="Lapidus A."/>
            <person name="Barry K."/>
            <person name="Detter J.C."/>
            <person name="Glavina del Rio T."/>
            <person name="Hammon N."/>
            <person name="Israni S."/>
            <person name="Dalin E."/>
            <person name="Tice H."/>
            <person name="Pitluck S."/>
            <person name="Chain P."/>
            <person name="Malfatti S."/>
            <person name="Shin M."/>
            <person name="Vergez L."/>
            <person name="Schmutz J."/>
            <person name="Larimer F."/>
            <person name="Land M."/>
            <person name="Hauser L."/>
            <person name="Kyrpides N."/>
            <person name="Lykidis A."/>
            <person name="Tiedje J."/>
            <person name="Richardson P."/>
        </authorList>
    </citation>
    <scope>NUCLEOTIDE SEQUENCE [LARGE SCALE GENOMIC DNA]</scope>
    <source>
        <strain>W3-18-1</strain>
    </source>
</reference>
<sequence length="221" mass="24757">MELTLHEARVIGCLLEKEITTPEQYPLSLNALTLACNQKTSREPVLDLSEAQVQDALDSLTKKRLISEQSGFGSRVVKYKHRFCNTEFSELQLSPAAVAIVCLLLLRGPQTPGELRTRSNRLHEFKDVIEVEDCIKQLISRTKPILKQLPREPGRRESRYVELFSETSANVVTTSDHTDKLHTAPVAALVEHGALVARVTELEQQVATLTQKFDELIASLT</sequence>
<name>Y2381_SHESW</name>
<dbReference type="EMBL" id="CP000503">
    <property type="protein sequence ID" value="ABM25205.1"/>
    <property type="molecule type" value="Genomic_DNA"/>
</dbReference>
<dbReference type="RefSeq" id="WP_011789670.1">
    <property type="nucleotide sequence ID" value="NC_008750.1"/>
</dbReference>
<dbReference type="SMR" id="A1RKL0"/>
<dbReference type="KEGG" id="shw:Sputw3181_2381"/>
<dbReference type="HOGENOM" id="CLU_057831_2_0_6"/>
<dbReference type="Proteomes" id="UP000002597">
    <property type="component" value="Chromosome"/>
</dbReference>
<dbReference type="Gene3D" id="1.10.10.10">
    <property type="entry name" value="Winged helix-like DNA-binding domain superfamily/Winged helix DNA-binding domain"/>
    <property type="match status" value="2"/>
</dbReference>
<dbReference type="HAMAP" id="MF_01584">
    <property type="entry name" value="UPF0502"/>
    <property type="match status" value="1"/>
</dbReference>
<dbReference type="InterPro" id="IPR007432">
    <property type="entry name" value="DUF480"/>
</dbReference>
<dbReference type="InterPro" id="IPR036388">
    <property type="entry name" value="WH-like_DNA-bd_sf"/>
</dbReference>
<dbReference type="InterPro" id="IPR036390">
    <property type="entry name" value="WH_DNA-bd_sf"/>
</dbReference>
<dbReference type="PANTHER" id="PTHR38768">
    <property type="entry name" value="UPF0502 PROTEIN YCEH"/>
    <property type="match status" value="1"/>
</dbReference>
<dbReference type="PANTHER" id="PTHR38768:SF1">
    <property type="entry name" value="UPF0502 PROTEIN YCEH"/>
    <property type="match status" value="1"/>
</dbReference>
<dbReference type="Pfam" id="PF04337">
    <property type="entry name" value="DUF480"/>
    <property type="match status" value="1"/>
</dbReference>
<dbReference type="SUPFAM" id="SSF46785">
    <property type="entry name" value="Winged helix' DNA-binding domain"/>
    <property type="match status" value="2"/>
</dbReference>
<evidence type="ECO:0000255" key="1">
    <source>
        <dbReference type="HAMAP-Rule" id="MF_01584"/>
    </source>
</evidence>
<proteinExistence type="inferred from homology"/>
<gene>
    <name type="ordered locus">Sputw3181_2381</name>
</gene>
<organism>
    <name type="scientific">Shewanella sp. (strain W3-18-1)</name>
    <dbReference type="NCBI Taxonomy" id="351745"/>
    <lineage>
        <taxon>Bacteria</taxon>
        <taxon>Pseudomonadati</taxon>
        <taxon>Pseudomonadota</taxon>
        <taxon>Gammaproteobacteria</taxon>
        <taxon>Alteromonadales</taxon>
        <taxon>Shewanellaceae</taxon>
        <taxon>Shewanella</taxon>
    </lineage>
</organism>